<dbReference type="EMBL" id="CP000880">
    <property type="protein sequence ID" value="ABX20275.1"/>
    <property type="molecule type" value="Genomic_DNA"/>
</dbReference>
<dbReference type="SMR" id="A9MHJ7"/>
<dbReference type="STRING" id="41514.SARI_00336"/>
<dbReference type="KEGG" id="ses:SARI_00336"/>
<dbReference type="HOGENOM" id="CLU_068529_2_0_6"/>
<dbReference type="Proteomes" id="UP000002084">
    <property type="component" value="Chromosome"/>
</dbReference>
<dbReference type="GO" id="GO:1990230">
    <property type="term" value="C:iron-sulfur cluster transfer complex"/>
    <property type="evidence" value="ECO:0007669"/>
    <property type="project" value="TreeGrafter"/>
</dbReference>
<dbReference type="GO" id="GO:0001671">
    <property type="term" value="F:ATPase activator activity"/>
    <property type="evidence" value="ECO:0007669"/>
    <property type="project" value="InterPro"/>
</dbReference>
<dbReference type="GO" id="GO:0051087">
    <property type="term" value="F:protein-folding chaperone binding"/>
    <property type="evidence" value="ECO:0007669"/>
    <property type="project" value="InterPro"/>
</dbReference>
<dbReference type="GO" id="GO:0044571">
    <property type="term" value="P:[2Fe-2S] cluster assembly"/>
    <property type="evidence" value="ECO:0007669"/>
    <property type="project" value="InterPro"/>
</dbReference>
<dbReference type="GO" id="GO:0051259">
    <property type="term" value="P:protein complex oligomerization"/>
    <property type="evidence" value="ECO:0007669"/>
    <property type="project" value="InterPro"/>
</dbReference>
<dbReference type="GO" id="GO:0006457">
    <property type="term" value="P:protein folding"/>
    <property type="evidence" value="ECO:0007669"/>
    <property type="project" value="UniProtKB-UniRule"/>
</dbReference>
<dbReference type="CDD" id="cd06257">
    <property type="entry name" value="DnaJ"/>
    <property type="match status" value="1"/>
</dbReference>
<dbReference type="FunFam" id="1.10.287.110:FF:000008">
    <property type="entry name" value="Co-chaperone protein HscB"/>
    <property type="match status" value="1"/>
</dbReference>
<dbReference type="FunFam" id="1.20.1280.20:FF:000001">
    <property type="entry name" value="Co-chaperone protein HscB"/>
    <property type="match status" value="1"/>
</dbReference>
<dbReference type="Gene3D" id="1.10.287.110">
    <property type="entry name" value="DnaJ domain"/>
    <property type="match status" value="1"/>
</dbReference>
<dbReference type="Gene3D" id="1.20.1280.20">
    <property type="entry name" value="HscB, C-terminal domain"/>
    <property type="match status" value="1"/>
</dbReference>
<dbReference type="HAMAP" id="MF_00682">
    <property type="entry name" value="HscB"/>
    <property type="match status" value="1"/>
</dbReference>
<dbReference type="InterPro" id="IPR001623">
    <property type="entry name" value="DnaJ_domain"/>
</dbReference>
<dbReference type="InterPro" id="IPR004640">
    <property type="entry name" value="HscB"/>
</dbReference>
<dbReference type="InterPro" id="IPR036386">
    <property type="entry name" value="HscB_C_sf"/>
</dbReference>
<dbReference type="InterPro" id="IPR009073">
    <property type="entry name" value="HscB_oligo_C"/>
</dbReference>
<dbReference type="InterPro" id="IPR036869">
    <property type="entry name" value="J_dom_sf"/>
</dbReference>
<dbReference type="NCBIfam" id="TIGR00714">
    <property type="entry name" value="hscB"/>
    <property type="match status" value="1"/>
</dbReference>
<dbReference type="NCBIfam" id="NF003449">
    <property type="entry name" value="PRK05014.1"/>
    <property type="match status" value="1"/>
</dbReference>
<dbReference type="PANTHER" id="PTHR14021">
    <property type="entry name" value="IRON-SULFUR CLUSTER CO-CHAPERONE PROTEIN HSCB"/>
    <property type="match status" value="1"/>
</dbReference>
<dbReference type="PANTHER" id="PTHR14021:SF15">
    <property type="entry name" value="IRON-SULFUR CLUSTER CO-CHAPERONE PROTEIN HSCB"/>
    <property type="match status" value="1"/>
</dbReference>
<dbReference type="Pfam" id="PF07743">
    <property type="entry name" value="HSCB_C"/>
    <property type="match status" value="1"/>
</dbReference>
<dbReference type="SMART" id="SM00271">
    <property type="entry name" value="DnaJ"/>
    <property type="match status" value="1"/>
</dbReference>
<dbReference type="SUPFAM" id="SSF46565">
    <property type="entry name" value="Chaperone J-domain"/>
    <property type="match status" value="1"/>
</dbReference>
<dbReference type="SUPFAM" id="SSF47144">
    <property type="entry name" value="HSC20 (HSCB), C-terminal oligomerisation domain"/>
    <property type="match status" value="1"/>
</dbReference>
<dbReference type="PROSITE" id="PS50076">
    <property type="entry name" value="DNAJ_2"/>
    <property type="match status" value="1"/>
</dbReference>
<sequence length="171" mass="19931">MDYFTLFGLPASYHIDTQALSLRFQDLQRQYHPDKFANGTQAQHLAAVQQSATINQAWQTLRHPLTRAEYLLSLHGFDLASEQHTVRDTAFLMEQLTLREELDDIEQTKDDARLESFIKRVQKMFDTRLQQMVTQLDNAAWGEAADTVRKLRFLDKLRSSADQLEEKLLDF</sequence>
<reference key="1">
    <citation type="submission" date="2007-11" db="EMBL/GenBank/DDBJ databases">
        <authorList>
            <consortium name="The Salmonella enterica serovar Arizonae Genome Sequencing Project"/>
            <person name="McClelland M."/>
            <person name="Sanderson E.K."/>
            <person name="Porwollik S."/>
            <person name="Spieth J."/>
            <person name="Clifton W.S."/>
            <person name="Fulton R."/>
            <person name="Chunyan W."/>
            <person name="Wollam A."/>
            <person name="Shah N."/>
            <person name="Pepin K."/>
            <person name="Bhonagiri V."/>
            <person name="Nash W."/>
            <person name="Johnson M."/>
            <person name="Thiruvilangam P."/>
            <person name="Wilson R."/>
        </authorList>
    </citation>
    <scope>NUCLEOTIDE SEQUENCE [LARGE SCALE GENOMIC DNA]</scope>
    <source>
        <strain>ATCC BAA-731 / CDC346-86 / RSK2980</strain>
    </source>
</reference>
<name>HSCB_SALAR</name>
<keyword id="KW-0143">Chaperone</keyword>
<keyword id="KW-1185">Reference proteome</keyword>
<evidence type="ECO:0000255" key="1">
    <source>
        <dbReference type="HAMAP-Rule" id="MF_00682"/>
    </source>
</evidence>
<organism>
    <name type="scientific">Salmonella arizonae (strain ATCC BAA-731 / CDC346-86 / RSK2980)</name>
    <dbReference type="NCBI Taxonomy" id="41514"/>
    <lineage>
        <taxon>Bacteria</taxon>
        <taxon>Pseudomonadati</taxon>
        <taxon>Pseudomonadota</taxon>
        <taxon>Gammaproteobacteria</taxon>
        <taxon>Enterobacterales</taxon>
        <taxon>Enterobacteriaceae</taxon>
        <taxon>Salmonella</taxon>
    </lineage>
</organism>
<gene>
    <name evidence="1" type="primary">hscB</name>
    <name type="ordered locus">SARI_00336</name>
</gene>
<accession>A9MHJ7</accession>
<protein>
    <recommendedName>
        <fullName evidence="1">Co-chaperone protein HscB</fullName>
    </recommendedName>
    <alternativeName>
        <fullName evidence="1">Hsc20</fullName>
    </alternativeName>
</protein>
<feature type="chain" id="PRO_1000083030" description="Co-chaperone protein HscB">
    <location>
        <begin position="1"/>
        <end position="171"/>
    </location>
</feature>
<feature type="domain" description="J" evidence="1">
    <location>
        <begin position="2"/>
        <end position="74"/>
    </location>
</feature>
<proteinExistence type="inferred from homology"/>
<comment type="function">
    <text evidence="1">Co-chaperone involved in the maturation of iron-sulfur cluster-containing proteins. Seems to help targeting proteins to be folded toward HscA.</text>
</comment>
<comment type="subunit">
    <text evidence="1">Interacts with HscA and stimulates its ATPase activity. Interacts with IscU.</text>
</comment>
<comment type="similarity">
    <text evidence="1">Belongs to the HscB family.</text>
</comment>